<protein>
    <recommendedName>
        <fullName evidence="1">Phosphopentomutase</fullName>
        <ecNumber evidence="1">5.4.2.7</ecNumber>
    </recommendedName>
    <alternativeName>
        <fullName evidence="1">Phosphodeoxyribomutase</fullName>
    </alternativeName>
</protein>
<proteinExistence type="inferred from homology"/>
<organism>
    <name type="scientific">Edwardsiella ictaluri (strain 93-146)</name>
    <dbReference type="NCBI Taxonomy" id="634503"/>
    <lineage>
        <taxon>Bacteria</taxon>
        <taxon>Pseudomonadati</taxon>
        <taxon>Pseudomonadota</taxon>
        <taxon>Gammaproteobacteria</taxon>
        <taxon>Enterobacterales</taxon>
        <taxon>Hafniaceae</taxon>
        <taxon>Edwardsiella</taxon>
    </lineage>
</organism>
<keyword id="KW-0963">Cytoplasm</keyword>
<keyword id="KW-0413">Isomerase</keyword>
<keyword id="KW-0464">Manganese</keyword>
<keyword id="KW-0479">Metal-binding</keyword>
<feature type="chain" id="PRO_1000212808" description="Phosphopentomutase">
    <location>
        <begin position="1"/>
        <end position="407"/>
    </location>
</feature>
<feature type="binding site" evidence="1">
    <location>
        <position position="10"/>
    </location>
    <ligand>
        <name>Mn(2+)</name>
        <dbReference type="ChEBI" id="CHEBI:29035"/>
        <label>1</label>
    </ligand>
</feature>
<feature type="binding site" evidence="1">
    <location>
        <position position="306"/>
    </location>
    <ligand>
        <name>Mn(2+)</name>
        <dbReference type="ChEBI" id="CHEBI:29035"/>
        <label>2</label>
    </ligand>
</feature>
<feature type="binding site" evidence="1">
    <location>
        <position position="311"/>
    </location>
    <ligand>
        <name>Mn(2+)</name>
        <dbReference type="ChEBI" id="CHEBI:29035"/>
        <label>2</label>
    </ligand>
</feature>
<feature type="binding site" evidence="1">
    <location>
        <position position="347"/>
    </location>
    <ligand>
        <name>Mn(2+)</name>
        <dbReference type="ChEBI" id="CHEBI:29035"/>
        <label>1</label>
    </ligand>
</feature>
<feature type="binding site" evidence="1">
    <location>
        <position position="348"/>
    </location>
    <ligand>
        <name>Mn(2+)</name>
        <dbReference type="ChEBI" id="CHEBI:29035"/>
        <label>1</label>
    </ligand>
</feature>
<feature type="binding site" evidence="1">
    <location>
        <position position="359"/>
    </location>
    <ligand>
        <name>Mn(2+)</name>
        <dbReference type="ChEBI" id="CHEBI:29035"/>
        <label>2</label>
    </ligand>
</feature>
<sequence length="407" mass="44457">MKRAFIMVLDSFGIGEAKDAKSFGDEGADTLGHIARACARGEADIGRQGPLHLPNLSRLGLGKAALESTGRFPEGLDENAEVIGAYGYANELSSGKDTPSGHWEIAGVPVLFDWGYFHEHQNSFPQALLDTLVERANLPGYLGNCHSSGTVILDQLGEEHMKSGKPIFYTSADSVFQIACHEETFGLERLYELCEIARDELNKGGYNIGRVIARPFVGDKAGHFQRTGNRHDLAVEPPAPTMLKKLVDEKQGDVVSIGKIADIYANVGITKKVKATGIDALFDATLQEMRQAGNDTIVFTNFVDFDSSYGHRRDVAGYAAALELFDRRLPEMLALVKEDDILILTADHGCDPTWHGSDHTREHIPVLVYGPKVKPGSLGERDTFADIGQTVARYFGLSPMAYGKPMF</sequence>
<comment type="function">
    <text evidence="1">Isomerase that catalyzes the conversion of deoxy-ribose 1-phosphate (dRib-1-P) and ribose 1-phosphate (Rib-1-P) to deoxy-ribose 5-phosphate (dRib-5-P) and ribose 5-phosphate (Rib-5-P), respectively.</text>
</comment>
<comment type="catalytic activity">
    <reaction evidence="1">
        <text>2-deoxy-alpha-D-ribose 1-phosphate = 2-deoxy-D-ribose 5-phosphate</text>
        <dbReference type="Rhea" id="RHEA:27658"/>
        <dbReference type="ChEBI" id="CHEBI:57259"/>
        <dbReference type="ChEBI" id="CHEBI:62877"/>
        <dbReference type="EC" id="5.4.2.7"/>
    </reaction>
</comment>
<comment type="catalytic activity">
    <reaction evidence="1">
        <text>alpha-D-ribose 1-phosphate = D-ribose 5-phosphate</text>
        <dbReference type="Rhea" id="RHEA:18793"/>
        <dbReference type="ChEBI" id="CHEBI:57720"/>
        <dbReference type="ChEBI" id="CHEBI:78346"/>
        <dbReference type="EC" id="5.4.2.7"/>
    </reaction>
</comment>
<comment type="cofactor">
    <cofactor evidence="1">
        <name>Mn(2+)</name>
        <dbReference type="ChEBI" id="CHEBI:29035"/>
    </cofactor>
    <text evidence="1">Binds 2 manganese ions.</text>
</comment>
<comment type="pathway">
    <text evidence="1">Carbohydrate degradation; 2-deoxy-D-ribose 1-phosphate degradation; D-glyceraldehyde 3-phosphate and acetaldehyde from 2-deoxy-alpha-D-ribose 1-phosphate: step 1/2.</text>
</comment>
<comment type="subcellular location">
    <subcellularLocation>
        <location evidence="1">Cytoplasm</location>
    </subcellularLocation>
</comment>
<comment type="similarity">
    <text evidence="1">Belongs to the phosphopentomutase family.</text>
</comment>
<accession>C5BHJ4</accession>
<name>DEOB_EDWI9</name>
<evidence type="ECO:0000255" key="1">
    <source>
        <dbReference type="HAMAP-Rule" id="MF_00740"/>
    </source>
</evidence>
<gene>
    <name evidence="1" type="primary">deoB</name>
    <name type="ordered locus">NT01EI_0564</name>
</gene>
<reference key="1">
    <citation type="submission" date="2009-03" db="EMBL/GenBank/DDBJ databases">
        <title>Complete genome sequence of Edwardsiella ictaluri 93-146.</title>
        <authorList>
            <person name="Williams M.L."/>
            <person name="Gillaspy A.F."/>
            <person name="Dyer D.W."/>
            <person name="Thune R.L."/>
            <person name="Waldbieser G.C."/>
            <person name="Schuster S.C."/>
            <person name="Gipson J."/>
            <person name="Zaitshik J."/>
            <person name="Landry C."/>
            <person name="Lawrence M.L."/>
        </authorList>
    </citation>
    <scope>NUCLEOTIDE SEQUENCE [LARGE SCALE GENOMIC DNA]</scope>
    <source>
        <strain>93-146</strain>
    </source>
</reference>
<dbReference type="EC" id="5.4.2.7" evidence="1"/>
<dbReference type="EMBL" id="CP001600">
    <property type="protein sequence ID" value="ACR67793.1"/>
    <property type="molecule type" value="Genomic_DNA"/>
</dbReference>
<dbReference type="RefSeq" id="WP_015869993.1">
    <property type="nucleotide sequence ID" value="NZ_CP169062.1"/>
</dbReference>
<dbReference type="SMR" id="C5BHJ4"/>
<dbReference type="STRING" id="67780.B6E78_13525"/>
<dbReference type="GeneID" id="69537642"/>
<dbReference type="KEGG" id="eic:NT01EI_0564"/>
<dbReference type="PATRIC" id="fig|634503.3.peg.509"/>
<dbReference type="HOGENOM" id="CLU_053861_0_0_6"/>
<dbReference type="OrthoDB" id="9769930at2"/>
<dbReference type="UniPathway" id="UPA00002">
    <property type="reaction ID" value="UER00467"/>
</dbReference>
<dbReference type="Proteomes" id="UP000001485">
    <property type="component" value="Chromosome"/>
</dbReference>
<dbReference type="GO" id="GO:0005829">
    <property type="term" value="C:cytosol"/>
    <property type="evidence" value="ECO:0007669"/>
    <property type="project" value="TreeGrafter"/>
</dbReference>
<dbReference type="GO" id="GO:0000287">
    <property type="term" value="F:magnesium ion binding"/>
    <property type="evidence" value="ECO:0007669"/>
    <property type="project" value="InterPro"/>
</dbReference>
<dbReference type="GO" id="GO:0030145">
    <property type="term" value="F:manganese ion binding"/>
    <property type="evidence" value="ECO:0007669"/>
    <property type="project" value="UniProtKB-UniRule"/>
</dbReference>
<dbReference type="GO" id="GO:0008973">
    <property type="term" value="F:phosphopentomutase activity"/>
    <property type="evidence" value="ECO:0007669"/>
    <property type="project" value="UniProtKB-UniRule"/>
</dbReference>
<dbReference type="GO" id="GO:0006018">
    <property type="term" value="P:2-deoxyribose 1-phosphate catabolic process"/>
    <property type="evidence" value="ECO:0007669"/>
    <property type="project" value="UniProtKB-UniRule"/>
</dbReference>
<dbReference type="GO" id="GO:0006015">
    <property type="term" value="P:5-phosphoribose 1-diphosphate biosynthetic process"/>
    <property type="evidence" value="ECO:0007669"/>
    <property type="project" value="UniProtKB-UniPathway"/>
</dbReference>
<dbReference type="GO" id="GO:0043094">
    <property type="term" value="P:metabolic compound salvage"/>
    <property type="evidence" value="ECO:0007669"/>
    <property type="project" value="InterPro"/>
</dbReference>
<dbReference type="GO" id="GO:0009117">
    <property type="term" value="P:nucleotide metabolic process"/>
    <property type="evidence" value="ECO:0007669"/>
    <property type="project" value="InterPro"/>
</dbReference>
<dbReference type="CDD" id="cd16009">
    <property type="entry name" value="PPM"/>
    <property type="match status" value="1"/>
</dbReference>
<dbReference type="FunFam" id="3.30.70.1250:FF:000001">
    <property type="entry name" value="Phosphopentomutase"/>
    <property type="match status" value="1"/>
</dbReference>
<dbReference type="Gene3D" id="3.40.720.10">
    <property type="entry name" value="Alkaline Phosphatase, subunit A"/>
    <property type="match status" value="1"/>
</dbReference>
<dbReference type="Gene3D" id="3.30.70.1250">
    <property type="entry name" value="Phosphopentomutase"/>
    <property type="match status" value="1"/>
</dbReference>
<dbReference type="HAMAP" id="MF_00740">
    <property type="entry name" value="Phosphopentomut"/>
    <property type="match status" value="1"/>
</dbReference>
<dbReference type="InterPro" id="IPR017850">
    <property type="entry name" value="Alkaline_phosphatase_core_sf"/>
</dbReference>
<dbReference type="InterPro" id="IPR010045">
    <property type="entry name" value="DeoB"/>
</dbReference>
<dbReference type="InterPro" id="IPR006124">
    <property type="entry name" value="Metalloenzyme"/>
</dbReference>
<dbReference type="InterPro" id="IPR024052">
    <property type="entry name" value="Phosphopentomutase_DeoB_cap_sf"/>
</dbReference>
<dbReference type="NCBIfam" id="TIGR01696">
    <property type="entry name" value="deoB"/>
    <property type="match status" value="1"/>
</dbReference>
<dbReference type="NCBIfam" id="NF003766">
    <property type="entry name" value="PRK05362.1"/>
    <property type="match status" value="1"/>
</dbReference>
<dbReference type="PANTHER" id="PTHR21110">
    <property type="entry name" value="PHOSPHOPENTOMUTASE"/>
    <property type="match status" value="1"/>
</dbReference>
<dbReference type="PANTHER" id="PTHR21110:SF0">
    <property type="entry name" value="PHOSPHOPENTOMUTASE"/>
    <property type="match status" value="1"/>
</dbReference>
<dbReference type="Pfam" id="PF01676">
    <property type="entry name" value="Metalloenzyme"/>
    <property type="match status" value="1"/>
</dbReference>
<dbReference type="PIRSF" id="PIRSF001491">
    <property type="entry name" value="Ppentomutase"/>
    <property type="match status" value="1"/>
</dbReference>
<dbReference type="SUPFAM" id="SSF53649">
    <property type="entry name" value="Alkaline phosphatase-like"/>
    <property type="match status" value="1"/>
</dbReference>
<dbReference type="SUPFAM" id="SSF143856">
    <property type="entry name" value="DeoB insert domain-like"/>
    <property type="match status" value="1"/>
</dbReference>